<gene>
    <name evidence="5" type="primary">PP2C63</name>
    <name evidence="6" type="synonym">PP2C-D8</name>
    <name evidence="8" type="ordered locus">At4g33920</name>
    <name evidence="9" type="ORF">F17I5.110</name>
</gene>
<evidence type="ECO:0000250" key="1">
    <source>
        <dbReference type="UniProtKB" id="P35813"/>
    </source>
</evidence>
<evidence type="ECO:0000250" key="2">
    <source>
        <dbReference type="UniProtKB" id="Q9LHJ9"/>
    </source>
</evidence>
<evidence type="ECO:0000255" key="3">
    <source>
        <dbReference type="PROSITE-ProRule" id="PRU01082"/>
    </source>
</evidence>
<evidence type="ECO:0000269" key="4">
    <source>
    </source>
</evidence>
<evidence type="ECO:0000303" key="5">
    <source>
    </source>
</evidence>
<evidence type="ECO:0000303" key="6">
    <source>
    </source>
</evidence>
<evidence type="ECO:0000305" key="7"/>
<evidence type="ECO:0000312" key="8">
    <source>
        <dbReference type="Araport" id="AT4G33920"/>
    </source>
</evidence>
<evidence type="ECO:0000312" key="9">
    <source>
        <dbReference type="EMBL" id="CAA19874.1"/>
    </source>
</evidence>
<comment type="function">
    <text evidence="4">May dephosphorylate and repress plasma membrane H(+)-ATPases (PM H(+)-ATPases, e.g. AHA1 and AHA2), thus influencing negatively plant growth and fitness.</text>
</comment>
<comment type="catalytic activity">
    <reaction evidence="2">
        <text>O-phospho-L-seryl-[protein] + H2O = L-seryl-[protein] + phosphate</text>
        <dbReference type="Rhea" id="RHEA:20629"/>
        <dbReference type="Rhea" id="RHEA-COMP:9863"/>
        <dbReference type="Rhea" id="RHEA-COMP:11604"/>
        <dbReference type="ChEBI" id="CHEBI:15377"/>
        <dbReference type="ChEBI" id="CHEBI:29999"/>
        <dbReference type="ChEBI" id="CHEBI:43474"/>
        <dbReference type="ChEBI" id="CHEBI:83421"/>
        <dbReference type="EC" id="3.1.3.16"/>
    </reaction>
</comment>
<comment type="catalytic activity">
    <reaction evidence="2">
        <text>O-phospho-L-threonyl-[protein] + H2O = L-threonyl-[protein] + phosphate</text>
        <dbReference type="Rhea" id="RHEA:47004"/>
        <dbReference type="Rhea" id="RHEA-COMP:11060"/>
        <dbReference type="Rhea" id="RHEA-COMP:11605"/>
        <dbReference type="ChEBI" id="CHEBI:15377"/>
        <dbReference type="ChEBI" id="CHEBI:30013"/>
        <dbReference type="ChEBI" id="CHEBI:43474"/>
        <dbReference type="ChEBI" id="CHEBI:61977"/>
        <dbReference type="EC" id="3.1.3.16"/>
    </reaction>
</comment>
<comment type="cofactor">
    <cofactor evidence="1">
        <name>Mg(2+)</name>
        <dbReference type="ChEBI" id="CHEBI:18420"/>
    </cofactor>
    <cofactor evidence="1">
        <name>Mn(2+)</name>
        <dbReference type="ChEBI" id="CHEBI:29035"/>
    </cofactor>
    <text evidence="1">Binds 2 magnesium or manganese ions per subunit.</text>
</comment>
<comment type="disruption phenotype">
    <text evidence="4">Plants missing PP2C42/PP2C-D2, PP2C64/PP2C-D5, PP2C79/PP2C-D7, PP2C63/PP2C-D8 and PP2C68/PP2C-D9 exhibit an increased hypocotyl length, as well as an enhanced sensitivity to LiCl and media acidification.</text>
</comment>
<comment type="similarity">
    <text evidence="7">Belongs to the PP2C family.</text>
</comment>
<protein>
    <recommendedName>
        <fullName evidence="5">Probable protein phosphatase 2C 63</fullName>
        <shortName evidence="5">AtPP2C63</shortName>
        <ecNumber evidence="2">3.1.3.16</ecNumber>
    </recommendedName>
</protein>
<proteinExistence type="evidence at transcript level"/>
<keyword id="KW-0378">Hydrolase</keyword>
<keyword id="KW-0460">Magnesium</keyword>
<keyword id="KW-0464">Manganese</keyword>
<keyword id="KW-0479">Metal-binding</keyword>
<keyword id="KW-0904">Protein phosphatase</keyword>
<keyword id="KW-1185">Reference proteome</keyword>
<organism>
    <name type="scientific">Arabidopsis thaliana</name>
    <name type="common">Mouse-ear cress</name>
    <dbReference type="NCBI Taxonomy" id="3702"/>
    <lineage>
        <taxon>Eukaryota</taxon>
        <taxon>Viridiplantae</taxon>
        <taxon>Streptophyta</taxon>
        <taxon>Embryophyta</taxon>
        <taxon>Tracheophyta</taxon>
        <taxon>Spermatophyta</taxon>
        <taxon>Magnoliopsida</taxon>
        <taxon>eudicotyledons</taxon>
        <taxon>Gunneridae</taxon>
        <taxon>Pentapetalae</taxon>
        <taxon>rosids</taxon>
        <taxon>malvids</taxon>
        <taxon>Brassicales</taxon>
        <taxon>Brassicaceae</taxon>
        <taxon>Camelineae</taxon>
        <taxon>Arabidopsis</taxon>
    </lineage>
</organism>
<sequence>MLRALARPLERCLGSRASGDGLLWQSELRPHAGGDYSIAVVQANSRLEDQSQVFTSSSATYVGVYDGHGGPEASRFVNRHLFPYMHKFAREHGGLSVDVIKKAFKETEEEFCGMVKRSLPMKPQMATVGSCCLVGAISNDTLYVANLGDSRAVLGSVVSGVDSNKGAVAERLSTDHNVAVEEVRKEVKALNPDDSQIVLYTRGVWRIKGIIQVSRSIGDVYLKKPEYYRDPIFQRHGNPIPLRRPAMTAEPSIIVRKLKPQDLFLIFASDGLWEHLSDETAVEIVLKHPRTGIARRLVRAALEEAAKKREMRYGDIKKIAKGIRRHFHDDISVIVVYLDQNKTSSSNSKLVKQGGITAPPDIYSLHSDEAEQRRLLNVLY</sequence>
<dbReference type="EC" id="3.1.3.16" evidence="2"/>
<dbReference type="EMBL" id="AL031032">
    <property type="protein sequence ID" value="CAA19874.1"/>
    <property type="molecule type" value="Genomic_DNA"/>
</dbReference>
<dbReference type="EMBL" id="AL161584">
    <property type="protein sequence ID" value="CAB80109.1"/>
    <property type="molecule type" value="Genomic_DNA"/>
</dbReference>
<dbReference type="EMBL" id="CP002687">
    <property type="protein sequence ID" value="AEE86293.1"/>
    <property type="molecule type" value="Genomic_DNA"/>
</dbReference>
<dbReference type="EMBL" id="AF372953">
    <property type="protein sequence ID" value="AAK50092.1"/>
    <property type="molecule type" value="mRNA"/>
</dbReference>
<dbReference type="EMBL" id="AY081718">
    <property type="protein sequence ID" value="AAL87371.1"/>
    <property type="molecule type" value="mRNA"/>
</dbReference>
<dbReference type="EMBL" id="AY087982">
    <property type="protein sequence ID" value="AAM65528.1"/>
    <property type="molecule type" value="mRNA"/>
</dbReference>
<dbReference type="PIR" id="T05220">
    <property type="entry name" value="T05220"/>
</dbReference>
<dbReference type="RefSeq" id="NP_195118.1">
    <property type="nucleotide sequence ID" value="NM_119551.4"/>
</dbReference>
<dbReference type="SMR" id="O81760"/>
<dbReference type="BioGRID" id="14818">
    <property type="interactions" value="5"/>
</dbReference>
<dbReference type="FunCoup" id="O81760">
    <property type="interactions" value="3227"/>
</dbReference>
<dbReference type="IntAct" id="O81760">
    <property type="interactions" value="7"/>
</dbReference>
<dbReference type="STRING" id="3702.O81760"/>
<dbReference type="PaxDb" id="3702-AT4G33920.1"/>
<dbReference type="ProteomicsDB" id="248727"/>
<dbReference type="EnsemblPlants" id="AT4G33920.1">
    <property type="protein sequence ID" value="AT4G33920.1"/>
    <property type="gene ID" value="AT4G33920"/>
</dbReference>
<dbReference type="GeneID" id="829536"/>
<dbReference type="Gramene" id="AT4G33920.1">
    <property type="protein sequence ID" value="AT4G33920.1"/>
    <property type="gene ID" value="AT4G33920"/>
</dbReference>
<dbReference type="KEGG" id="ath:AT4G33920"/>
<dbReference type="Araport" id="AT4G33920"/>
<dbReference type="TAIR" id="AT4G33920">
    <property type="gene designation" value="APD5"/>
</dbReference>
<dbReference type="eggNOG" id="KOG0700">
    <property type="taxonomic scope" value="Eukaryota"/>
</dbReference>
<dbReference type="HOGENOM" id="CLU_013173_2_2_1"/>
<dbReference type="InParanoid" id="O81760"/>
<dbReference type="OMA" id="DCCFRRR"/>
<dbReference type="OrthoDB" id="420076at2759"/>
<dbReference type="PhylomeDB" id="O81760"/>
<dbReference type="PRO" id="PR:O81760"/>
<dbReference type="Proteomes" id="UP000006548">
    <property type="component" value="Chromosome 4"/>
</dbReference>
<dbReference type="ExpressionAtlas" id="O81760">
    <property type="expression patterns" value="baseline and differential"/>
</dbReference>
<dbReference type="GO" id="GO:0046872">
    <property type="term" value="F:metal ion binding"/>
    <property type="evidence" value="ECO:0007669"/>
    <property type="project" value="UniProtKB-KW"/>
</dbReference>
<dbReference type="GO" id="GO:0004722">
    <property type="term" value="F:protein serine/threonine phosphatase activity"/>
    <property type="evidence" value="ECO:0007669"/>
    <property type="project" value="UniProtKB-EC"/>
</dbReference>
<dbReference type="CDD" id="cd00143">
    <property type="entry name" value="PP2Cc"/>
    <property type="match status" value="1"/>
</dbReference>
<dbReference type="FunFam" id="3.60.40.10:FF:000020">
    <property type="entry name" value="Probable protein phosphatase 2C 42"/>
    <property type="match status" value="1"/>
</dbReference>
<dbReference type="Gene3D" id="3.60.40.10">
    <property type="entry name" value="PPM-type phosphatase domain"/>
    <property type="match status" value="1"/>
</dbReference>
<dbReference type="InterPro" id="IPR015655">
    <property type="entry name" value="PP2C"/>
</dbReference>
<dbReference type="InterPro" id="IPR000222">
    <property type="entry name" value="PP2C_BS"/>
</dbReference>
<dbReference type="InterPro" id="IPR036457">
    <property type="entry name" value="PPM-type-like_dom_sf"/>
</dbReference>
<dbReference type="InterPro" id="IPR001932">
    <property type="entry name" value="PPM-type_phosphatase-like_dom"/>
</dbReference>
<dbReference type="PANTHER" id="PTHR47992">
    <property type="entry name" value="PROTEIN PHOSPHATASE"/>
    <property type="match status" value="1"/>
</dbReference>
<dbReference type="Pfam" id="PF00481">
    <property type="entry name" value="PP2C"/>
    <property type="match status" value="1"/>
</dbReference>
<dbReference type="SMART" id="SM00332">
    <property type="entry name" value="PP2Cc"/>
    <property type="match status" value="1"/>
</dbReference>
<dbReference type="SUPFAM" id="SSF81606">
    <property type="entry name" value="PP2C-like"/>
    <property type="match status" value="1"/>
</dbReference>
<dbReference type="PROSITE" id="PS01032">
    <property type="entry name" value="PPM_1"/>
    <property type="match status" value="1"/>
</dbReference>
<dbReference type="PROSITE" id="PS51746">
    <property type="entry name" value="PPM_2"/>
    <property type="match status" value="1"/>
</dbReference>
<feature type="chain" id="PRO_0000367985" description="Probable protein phosphatase 2C 63">
    <location>
        <begin position="1"/>
        <end position="380"/>
    </location>
</feature>
<feature type="domain" description="PPM-type phosphatase" evidence="3">
    <location>
        <begin position="35"/>
        <end position="338"/>
    </location>
</feature>
<feature type="binding site" evidence="1">
    <location>
        <position position="66"/>
    </location>
    <ligand>
        <name>Mn(2+)</name>
        <dbReference type="ChEBI" id="CHEBI:29035"/>
        <label>1</label>
    </ligand>
</feature>
<feature type="binding site" evidence="1">
    <location>
        <position position="66"/>
    </location>
    <ligand>
        <name>Mn(2+)</name>
        <dbReference type="ChEBI" id="CHEBI:29035"/>
        <label>2</label>
    </ligand>
</feature>
<feature type="binding site" evidence="1">
    <location>
        <position position="67"/>
    </location>
    <ligand>
        <name>Mn(2+)</name>
        <dbReference type="ChEBI" id="CHEBI:29035"/>
        <label>1</label>
    </ligand>
</feature>
<feature type="binding site" evidence="1">
    <location>
        <position position="270"/>
    </location>
    <ligand>
        <name>Mn(2+)</name>
        <dbReference type="ChEBI" id="CHEBI:29035"/>
        <label>2</label>
    </ligand>
</feature>
<feature type="binding site" evidence="1">
    <location>
        <position position="329"/>
    </location>
    <ligand>
        <name>Mn(2+)</name>
        <dbReference type="ChEBI" id="CHEBI:29035"/>
        <label>2</label>
    </ligand>
</feature>
<accession>O81760</accession>
<name>P2C63_ARATH</name>
<reference key="1">
    <citation type="journal article" date="1999" name="Nature">
        <title>Sequence and analysis of chromosome 4 of the plant Arabidopsis thaliana.</title>
        <authorList>
            <person name="Mayer K.F.X."/>
            <person name="Schueller C."/>
            <person name="Wambutt R."/>
            <person name="Murphy G."/>
            <person name="Volckaert G."/>
            <person name="Pohl T."/>
            <person name="Duesterhoeft A."/>
            <person name="Stiekema W."/>
            <person name="Entian K.-D."/>
            <person name="Terryn N."/>
            <person name="Harris B."/>
            <person name="Ansorge W."/>
            <person name="Brandt P."/>
            <person name="Grivell L.A."/>
            <person name="Rieger M."/>
            <person name="Weichselgartner M."/>
            <person name="de Simone V."/>
            <person name="Obermaier B."/>
            <person name="Mache R."/>
            <person name="Mueller M."/>
            <person name="Kreis M."/>
            <person name="Delseny M."/>
            <person name="Puigdomenech P."/>
            <person name="Watson M."/>
            <person name="Schmidtheini T."/>
            <person name="Reichert B."/>
            <person name="Portetelle D."/>
            <person name="Perez-Alonso M."/>
            <person name="Boutry M."/>
            <person name="Bancroft I."/>
            <person name="Vos P."/>
            <person name="Hoheisel J."/>
            <person name="Zimmermann W."/>
            <person name="Wedler H."/>
            <person name="Ridley P."/>
            <person name="Langham S.-A."/>
            <person name="McCullagh B."/>
            <person name="Bilham L."/>
            <person name="Robben J."/>
            <person name="van der Schueren J."/>
            <person name="Grymonprez B."/>
            <person name="Chuang Y.-J."/>
            <person name="Vandenbussche F."/>
            <person name="Braeken M."/>
            <person name="Weltjens I."/>
            <person name="Voet M."/>
            <person name="Bastiaens I."/>
            <person name="Aert R."/>
            <person name="Defoor E."/>
            <person name="Weitzenegger T."/>
            <person name="Bothe G."/>
            <person name="Ramsperger U."/>
            <person name="Hilbert H."/>
            <person name="Braun M."/>
            <person name="Holzer E."/>
            <person name="Brandt A."/>
            <person name="Peters S."/>
            <person name="van Staveren M."/>
            <person name="Dirkse W."/>
            <person name="Mooijman P."/>
            <person name="Klein Lankhorst R."/>
            <person name="Rose M."/>
            <person name="Hauf J."/>
            <person name="Koetter P."/>
            <person name="Berneiser S."/>
            <person name="Hempel S."/>
            <person name="Feldpausch M."/>
            <person name="Lamberth S."/>
            <person name="Van den Daele H."/>
            <person name="De Keyser A."/>
            <person name="Buysshaert C."/>
            <person name="Gielen J."/>
            <person name="Villarroel R."/>
            <person name="De Clercq R."/>
            <person name="van Montagu M."/>
            <person name="Rogers J."/>
            <person name="Cronin A."/>
            <person name="Quail M.A."/>
            <person name="Bray-Allen S."/>
            <person name="Clark L."/>
            <person name="Doggett J."/>
            <person name="Hall S."/>
            <person name="Kay M."/>
            <person name="Lennard N."/>
            <person name="McLay K."/>
            <person name="Mayes R."/>
            <person name="Pettett A."/>
            <person name="Rajandream M.A."/>
            <person name="Lyne M."/>
            <person name="Benes V."/>
            <person name="Rechmann S."/>
            <person name="Borkova D."/>
            <person name="Bloecker H."/>
            <person name="Scharfe M."/>
            <person name="Grimm M."/>
            <person name="Loehnert T.-H."/>
            <person name="Dose S."/>
            <person name="de Haan M."/>
            <person name="Maarse A.C."/>
            <person name="Schaefer M."/>
            <person name="Mueller-Auer S."/>
            <person name="Gabel C."/>
            <person name="Fuchs M."/>
            <person name="Fartmann B."/>
            <person name="Granderath K."/>
            <person name="Dauner D."/>
            <person name="Herzl A."/>
            <person name="Neumann S."/>
            <person name="Argiriou A."/>
            <person name="Vitale D."/>
            <person name="Liguori R."/>
            <person name="Piravandi E."/>
            <person name="Massenet O."/>
            <person name="Quigley F."/>
            <person name="Clabauld G."/>
            <person name="Muendlein A."/>
            <person name="Felber R."/>
            <person name="Schnabl S."/>
            <person name="Hiller R."/>
            <person name="Schmidt W."/>
            <person name="Lecharny A."/>
            <person name="Aubourg S."/>
            <person name="Chefdor F."/>
            <person name="Cooke R."/>
            <person name="Berger C."/>
            <person name="Monfort A."/>
            <person name="Casacuberta E."/>
            <person name="Gibbons T."/>
            <person name="Weber N."/>
            <person name="Vandenbol M."/>
            <person name="Bargues M."/>
            <person name="Terol J."/>
            <person name="Torres A."/>
            <person name="Perez-Perez A."/>
            <person name="Purnelle B."/>
            <person name="Bent E."/>
            <person name="Johnson S."/>
            <person name="Tacon D."/>
            <person name="Jesse T."/>
            <person name="Heijnen L."/>
            <person name="Schwarz S."/>
            <person name="Scholler P."/>
            <person name="Heber S."/>
            <person name="Francs P."/>
            <person name="Bielke C."/>
            <person name="Frishman D."/>
            <person name="Haase D."/>
            <person name="Lemcke K."/>
            <person name="Mewes H.-W."/>
            <person name="Stocker S."/>
            <person name="Zaccaria P."/>
            <person name="Bevan M."/>
            <person name="Wilson R.K."/>
            <person name="de la Bastide M."/>
            <person name="Habermann K."/>
            <person name="Parnell L."/>
            <person name="Dedhia N."/>
            <person name="Gnoj L."/>
            <person name="Schutz K."/>
            <person name="Huang E."/>
            <person name="Spiegel L."/>
            <person name="Sekhon M."/>
            <person name="Murray J."/>
            <person name="Sheet P."/>
            <person name="Cordes M."/>
            <person name="Abu-Threideh J."/>
            <person name="Stoneking T."/>
            <person name="Kalicki J."/>
            <person name="Graves T."/>
            <person name="Harmon G."/>
            <person name="Edwards J."/>
            <person name="Latreille P."/>
            <person name="Courtney L."/>
            <person name="Cloud J."/>
            <person name="Abbott A."/>
            <person name="Scott K."/>
            <person name="Johnson D."/>
            <person name="Minx P."/>
            <person name="Bentley D."/>
            <person name="Fulton B."/>
            <person name="Miller N."/>
            <person name="Greco T."/>
            <person name="Kemp K."/>
            <person name="Kramer J."/>
            <person name="Fulton L."/>
            <person name="Mardis E."/>
            <person name="Dante M."/>
            <person name="Pepin K."/>
            <person name="Hillier L.W."/>
            <person name="Nelson J."/>
            <person name="Spieth J."/>
            <person name="Ryan E."/>
            <person name="Andrews S."/>
            <person name="Geisel C."/>
            <person name="Layman D."/>
            <person name="Du H."/>
            <person name="Ali J."/>
            <person name="Berghoff A."/>
            <person name="Jones K."/>
            <person name="Drone K."/>
            <person name="Cotton M."/>
            <person name="Joshu C."/>
            <person name="Antonoiu B."/>
            <person name="Zidanic M."/>
            <person name="Strong C."/>
            <person name="Sun H."/>
            <person name="Lamar B."/>
            <person name="Yordan C."/>
            <person name="Ma P."/>
            <person name="Zhong J."/>
            <person name="Preston R."/>
            <person name="Vil D."/>
            <person name="Shekher M."/>
            <person name="Matero A."/>
            <person name="Shah R."/>
            <person name="Swaby I.K."/>
            <person name="O'Shaughnessy A."/>
            <person name="Rodriguez M."/>
            <person name="Hoffman J."/>
            <person name="Till S."/>
            <person name="Granat S."/>
            <person name="Shohdy N."/>
            <person name="Hasegawa A."/>
            <person name="Hameed A."/>
            <person name="Lodhi M."/>
            <person name="Johnson A."/>
            <person name="Chen E."/>
            <person name="Marra M.A."/>
            <person name="Martienssen R."/>
            <person name="McCombie W.R."/>
        </authorList>
    </citation>
    <scope>NUCLEOTIDE SEQUENCE [LARGE SCALE GENOMIC DNA]</scope>
    <source>
        <strain>cv. Columbia</strain>
    </source>
</reference>
<reference key="2">
    <citation type="journal article" date="2017" name="Plant J.">
        <title>Araport11: a complete reannotation of the Arabidopsis thaliana reference genome.</title>
        <authorList>
            <person name="Cheng C.Y."/>
            <person name="Krishnakumar V."/>
            <person name="Chan A.P."/>
            <person name="Thibaud-Nissen F."/>
            <person name="Schobel S."/>
            <person name="Town C.D."/>
        </authorList>
    </citation>
    <scope>GENOME REANNOTATION</scope>
    <source>
        <strain>cv. Columbia</strain>
    </source>
</reference>
<reference key="3">
    <citation type="journal article" date="2003" name="Science">
        <title>Empirical analysis of transcriptional activity in the Arabidopsis genome.</title>
        <authorList>
            <person name="Yamada K."/>
            <person name="Lim J."/>
            <person name="Dale J.M."/>
            <person name="Chen H."/>
            <person name="Shinn P."/>
            <person name="Palm C.J."/>
            <person name="Southwick A.M."/>
            <person name="Wu H.C."/>
            <person name="Kim C.J."/>
            <person name="Nguyen M."/>
            <person name="Pham P.K."/>
            <person name="Cheuk R.F."/>
            <person name="Karlin-Newmann G."/>
            <person name="Liu S.X."/>
            <person name="Lam B."/>
            <person name="Sakano H."/>
            <person name="Wu T."/>
            <person name="Yu G."/>
            <person name="Miranda M."/>
            <person name="Quach H.L."/>
            <person name="Tripp M."/>
            <person name="Chang C.H."/>
            <person name="Lee J.M."/>
            <person name="Toriumi M.J."/>
            <person name="Chan M.M."/>
            <person name="Tang C.C."/>
            <person name="Onodera C.S."/>
            <person name="Deng J.M."/>
            <person name="Akiyama K."/>
            <person name="Ansari Y."/>
            <person name="Arakawa T."/>
            <person name="Banh J."/>
            <person name="Banno F."/>
            <person name="Bowser L."/>
            <person name="Brooks S.Y."/>
            <person name="Carninci P."/>
            <person name="Chao Q."/>
            <person name="Choy N."/>
            <person name="Enju A."/>
            <person name="Goldsmith A.D."/>
            <person name="Gurjal M."/>
            <person name="Hansen N.F."/>
            <person name="Hayashizaki Y."/>
            <person name="Johnson-Hopson C."/>
            <person name="Hsuan V.W."/>
            <person name="Iida K."/>
            <person name="Karnes M."/>
            <person name="Khan S."/>
            <person name="Koesema E."/>
            <person name="Ishida J."/>
            <person name="Jiang P.X."/>
            <person name="Jones T."/>
            <person name="Kawai J."/>
            <person name="Kamiya A."/>
            <person name="Meyers C."/>
            <person name="Nakajima M."/>
            <person name="Narusaka M."/>
            <person name="Seki M."/>
            <person name="Sakurai T."/>
            <person name="Satou M."/>
            <person name="Tamse R."/>
            <person name="Vaysberg M."/>
            <person name="Wallender E.K."/>
            <person name="Wong C."/>
            <person name="Yamamura Y."/>
            <person name="Yuan S."/>
            <person name="Shinozaki K."/>
            <person name="Davis R.W."/>
            <person name="Theologis A."/>
            <person name="Ecker J.R."/>
        </authorList>
    </citation>
    <scope>NUCLEOTIDE SEQUENCE [LARGE SCALE MRNA]</scope>
    <source>
        <strain>cv. Columbia</strain>
    </source>
</reference>
<reference key="4">
    <citation type="submission" date="2002-03" db="EMBL/GenBank/DDBJ databases">
        <title>Full-length cDNA from Arabidopsis thaliana.</title>
        <authorList>
            <person name="Brover V.V."/>
            <person name="Troukhan M.E."/>
            <person name="Alexandrov N.A."/>
            <person name="Lu Y.-P."/>
            <person name="Flavell R.B."/>
            <person name="Feldmann K.A."/>
        </authorList>
    </citation>
    <scope>NUCLEOTIDE SEQUENCE [LARGE SCALE MRNA]</scope>
</reference>
<reference key="5">
    <citation type="journal article" date="2008" name="BMC Genomics">
        <title>Genome-wide and expression analysis of protein phosphatase 2C in rice and Arabidopsis.</title>
        <authorList>
            <person name="Xue T."/>
            <person name="Wang D."/>
            <person name="Zhang S."/>
            <person name="Ehlting J."/>
            <person name="Ni F."/>
            <person name="Jacab S."/>
            <person name="Zheng C."/>
            <person name="Zhong Y."/>
        </authorList>
    </citation>
    <scope>GENE FAMILY</scope>
    <scope>NOMENCLATURE</scope>
</reference>
<reference key="6">
    <citation type="journal article" date="2014" name="Plant Cell">
        <title>SAUR inhibition of PP2C-D phosphatases activates plasma membrane H+-ATPases to promote cell expansion in Arabidopsis.</title>
        <authorList>
            <person name="Spartz A.K."/>
            <person name="Ren H."/>
            <person name="Park M.Y."/>
            <person name="Grandt K.N."/>
            <person name="Lee S.H."/>
            <person name="Murphy A.S."/>
            <person name="Sussman M.R."/>
            <person name="Overvoorde P.J."/>
            <person name="Gray W.M."/>
        </authorList>
    </citation>
    <scope>FUNCTION</scope>
    <scope>DISRUPTION PHENOTYPE</scope>
    <scope>GENE FAMILY</scope>
    <scope>NOMENCLATURE</scope>
    <source>
        <strain>cv. Columbia</strain>
    </source>
</reference>